<gene>
    <name evidence="1" type="primary">gmhA</name>
    <name type="ordered locus">Rru_A2605</name>
</gene>
<dbReference type="EC" id="5.3.1.28" evidence="1"/>
<dbReference type="EMBL" id="CP000230">
    <property type="protein sequence ID" value="ABC23402.1"/>
    <property type="molecule type" value="Genomic_DNA"/>
</dbReference>
<dbReference type="RefSeq" id="WP_011390355.1">
    <property type="nucleotide sequence ID" value="NC_007643.1"/>
</dbReference>
<dbReference type="RefSeq" id="YP_427689.1">
    <property type="nucleotide sequence ID" value="NC_007643.1"/>
</dbReference>
<dbReference type="SMR" id="Q2RR43"/>
<dbReference type="STRING" id="269796.Rru_A2605"/>
<dbReference type="EnsemblBacteria" id="ABC23402">
    <property type="protein sequence ID" value="ABC23402"/>
    <property type="gene ID" value="Rru_A2605"/>
</dbReference>
<dbReference type="KEGG" id="rru:Rru_A2605"/>
<dbReference type="PATRIC" id="fig|269796.9.peg.2714"/>
<dbReference type="eggNOG" id="COG0279">
    <property type="taxonomic scope" value="Bacteria"/>
</dbReference>
<dbReference type="HOGENOM" id="CLU_080999_4_0_5"/>
<dbReference type="PhylomeDB" id="Q2RR43"/>
<dbReference type="UniPathway" id="UPA00041">
    <property type="reaction ID" value="UER00436"/>
</dbReference>
<dbReference type="Proteomes" id="UP000001929">
    <property type="component" value="Chromosome"/>
</dbReference>
<dbReference type="GO" id="GO:0005737">
    <property type="term" value="C:cytoplasm"/>
    <property type="evidence" value="ECO:0007669"/>
    <property type="project" value="UniProtKB-SubCell"/>
</dbReference>
<dbReference type="GO" id="GO:0097367">
    <property type="term" value="F:carbohydrate derivative binding"/>
    <property type="evidence" value="ECO:0007669"/>
    <property type="project" value="InterPro"/>
</dbReference>
<dbReference type="GO" id="GO:0008968">
    <property type="term" value="F:D-sedoheptulose 7-phosphate isomerase activity"/>
    <property type="evidence" value="ECO:0007669"/>
    <property type="project" value="UniProtKB-UniRule"/>
</dbReference>
<dbReference type="GO" id="GO:0008270">
    <property type="term" value="F:zinc ion binding"/>
    <property type="evidence" value="ECO:0007669"/>
    <property type="project" value="UniProtKB-UniRule"/>
</dbReference>
<dbReference type="GO" id="GO:0005975">
    <property type="term" value="P:carbohydrate metabolic process"/>
    <property type="evidence" value="ECO:0007669"/>
    <property type="project" value="UniProtKB-UniRule"/>
</dbReference>
<dbReference type="GO" id="GO:2001061">
    <property type="term" value="P:D-glycero-D-manno-heptose 7-phosphate biosynthetic process"/>
    <property type="evidence" value="ECO:0007669"/>
    <property type="project" value="UniProtKB-UniPathway"/>
</dbReference>
<dbReference type="CDD" id="cd05006">
    <property type="entry name" value="SIS_GmhA"/>
    <property type="match status" value="1"/>
</dbReference>
<dbReference type="Gene3D" id="3.40.50.10490">
    <property type="entry name" value="Glucose-6-phosphate isomerase like protein, domain 1"/>
    <property type="match status" value="1"/>
</dbReference>
<dbReference type="HAMAP" id="MF_00067">
    <property type="entry name" value="GmhA"/>
    <property type="match status" value="1"/>
</dbReference>
<dbReference type="InterPro" id="IPR035461">
    <property type="entry name" value="GmhA/DiaA"/>
</dbReference>
<dbReference type="InterPro" id="IPR004515">
    <property type="entry name" value="Phosphoheptose_Isoase"/>
</dbReference>
<dbReference type="InterPro" id="IPR001347">
    <property type="entry name" value="SIS_dom"/>
</dbReference>
<dbReference type="InterPro" id="IPR046348">
    <property type="entry name" value="SIS_dom_sf"/>
</dbReference>
<dbReference type="InterPro" id="IPR050099">
    <property type="entry name" value="SIS_GmhA/DiaA_subfam"/>
</dbReference>
<dbReference type="NCBIfam" id="TIGR00441">
    <property type="entry name" value="gmhA"/>
    <property type="match status" value="1"/>
</dbReference>
<dbReference type="PANTHER" id="PTHR30390:SF6">
    <property type="entry name" value="DNAA INITIATOR-ASSOCIATING PROTEIN DIAA"/>
    <property type="match status" value="1"/>
</dbReference>
<dbReference type="PANTHER" id="PTHR30390">
    <property type="entry name" value="SEDOHEPTULOSE 7-PHOSPHATE ISOMERASE / DNAA INITIATOR-ASSOCIATING FACTOR FOR REPLICATION INITIATION"/>
    <property type="match status" value="1"/>
</dbReference>
<dbReference type="Pfam" id="PF13580">
    <property type="entry name" value="SIS_2"/>
    <property type="match status" value="1"/>
</dbReference>
<dbReference type="SUPFAM" id="SSF53697">
    <property type="entry name" value="SIS domain"/>
    <property type="match status" value="1"/>
</dbReference>
<dbReference type="PROSITE" id="PS51464">
    <property type="entry name" value="SIS"/>
    <property type="match status" value="1"/>
</dbReference>
<accession>Q2RR43</accession>
<keyword id="KW-0119">Carbohydrate metabolism</keyword>
<keyword id="KW-0963">Cytoplasm</keyword>
<keyword id="KW-0413">Isomerase</keyword>
<keyword id="KW-0479">Metal-binding</keyword>
<keyword id="KW-1185">Reference proteome</keyword>
<keyword id="KW-0862">Zinc</keyword>
<feature type="chain" id="PRO_1000009093" description="Phosphoheptose isomerase">
    <location>
        <begin position="1"/>
        <end position="188"/>
    </location>
</feature>
<feature type="domain" description="SIS" evidence="1">
    <location>
        <begin position="33"/>
        <end position="188"/>
    </location>
</feature>
<feature type="binding site" evidence="1">
    <location>
        <begin position="48"/>
        <end position="50"/>
    </location>
    <ligand>
        <name>substrate</name>
    </ligand>
</feature>
<feature type="binding site" evidence="1">
    <location>
        <position position="57"/>
    </location>
    <ligand>
        <name>Zn(2+)</name>
        <dbReference type="ChEBI" id="CHEBI:29105"/>
    </ligand>
</feature>
<feature type="binding site" evidence="1">
    <location>
        <position position="61"/>
    </location>
    <ligand>
        <name>substrate</name>
    </ligand>
</feature>
<feature type="binding site" evidence="1">
    <location>
        <position position="61"/>
    </location>
    <ligand>
        <name>Zn(2+)</name>
        <dbReference type="ChEBI" id="CHEBI:29105"/>
    </ligand>
</feature>
<feature type="binding site" evidence="1">
    <location>
        <begin position="90"/>
        <end position="91"/>
    </location>
    <ligand>
        <name>substrate</name>
    </ligand>
</feature>
<feature type="binding site" evidence="1">
    <location>
        <begin position="116"/>
        <end position="118"/>
    </location>
    <ligand>
        <name>substrate</name>
    </ligand>
</feature>
<feature type="binding site" evidence="1">
    <location>
        <position position="121"/>
    </location>
    <ligand>
        <name>substrate</name>
    </ligand>
</feature>
<feature type="binding site" evidence="1">
    <location>
        <position position="168"/>
    </location>
    <ligand>
        <name>substrate</name>
    </ligand>
</feature>
<feature type="binding site" evidence="1">
    <location>
        <position position="168"/>
    </location>
    <ligand>
        <name>Zn(2+)</name>
        <dbReference type="ChEBI" id="CHEBI:29105"/>
    </ligand>
</feature>
<feature type="binding site" evidence="1">
    <location>
        <position position="176"/>
    </location>
    <ligand>
        <name>Zn(2+)</name>
        <dbReference type="ChEBI" id="CHEBI:29105"/>
    </ligand>
</feature>
<evidence type="ECO:0000255" key="1">
    <source>
        <dbReference type="HAMAP-Rule" id="MF_00067"/>
    </source>
</evidence>
<reference key="1">
    <citation type="journal article" date="2011" name="Stand. Genomic Sci.">
        <title>Complete genome sequence of Rhodospirillum rubrum type strain (S1).</title>
        <authorList>
            <person name="Munk A.C."/>
            <person name="Copeland A."/>
            <person name="Lucas S."/>
            <person name="Lapidus A."/>
            <person name="Del Rio T.G."/>
            <person name="Barry K."/>
            <person name="Detter J.C."/>
            <person name="Hammon N."/>
            <person name="Israni S."/>
            <person name="Pitluck S."/>
            <person name="Brettin T."/>
            <person name="Bruce D."/>
            <person name="Han C."/>
            <person name="Tapia R."/>
            <person name="Gilna P."/>
            <person name="Schmutz J."/>
            <person name="Larimer F."/>
            <person name="Land M."/>
            <person name="Kyrpides N.C."/>
            <person name="Mavromatis K."/>
            <person name="Richardson P."/>
            <person name="Rohde M."/>
            <person name="Goeker M."/>
            <person name="Klenk H.P."/>
            <person name="Zhang Y."/>
            <person name="Roberts G.P."/>
            <person name="Reslewic S."/>
            <person name="Schwartz D.C."/>
        </authorList>
    </citation>
    <scope>NUCLEOTIDE SEQUENCE [LARGE SCALE GENOMIC DNA]</scope>
    <source>
        <strain>ATCC 11170 / ATH 1.1.1 / DSM 467 / LMG 4362 / NCIMB 8255 / S1</strain>
    </source>
</reference>
<proteinExistence type="inferred from homology"/>
<name>GMHA_RHORT</name>
<protein>
    <recommendedName>
        <fullName evidence="1">Phosphoheptose isomerase</fullName>
        <ecNumber evidence="1">5.3.1.28</ecNumber>
    </recommendedName>
    <alternativeName>
        <fullName evidence="1">Sedoheptulose 7-phosphate isomerase</fullName>
    </alternativeName>
</protein>
<sequence>MEDEIRAFCQTAADCFIRLGDCAPAIAEAAGVVTASLRAGGKVMFCGNGGSAADAQHLAAELEGRYLKERAPLPGMALTTNTSTLTAVGNDYGFDHIFSRQVSAHGRPGDVLVALSTSGNSANVLKAIEAAREKGVSVIGLTGAGGGKMAEVCDLCIRVPSTQTPQIQQMHIAVGHLLCGLVEDALCS</sequence>
<comment type="function">
    <text evidence="1">Catalyzes the isomerization of sedoheptulose 7-phosphate in D-glycero-D-manno-heptose 7-phosphate.</text>
</comment>
<comment type="catalytic activity">
    <reaction evidence="1">
        <text>2 D-sedoheptulose 7-phosphate = D-glycero-alpha-D-manno-heptose 7-phosphate + D-glycero-beta-D-manno-heptose 7-phosphate</text>
        <dbReference type="Rhea" id="RHEA:27489"/>
        <dbReference type="ChEBI" id="CHEBI:57483"/>
        <dbReference type="ChEBI" id="CHEBI:60203"/>
        <dbReference type="ChEBI" id="CHEBI:60204"/>
        <dbReference type="EC" id="5.3.1.28"/>
    </reaction>
</comment>
<comment type="cofactor">
    <cofactor evidence="1">
        <name>Zn(2+)</name>
        <dbReference type="ChEBI" id="CHEBI:29105"/>
    </cofactor>
    <text evidence="1">Binds 1 zinc ion per subunit.</text>
</comment>
<comment type="pathway">
    <text evidence="1">Carbohydrate biosynthesis; D-glycero-D-manno-heptose 7-phosphate biosynthesis; D-glycero-alpha-D-manno-heptose 7-phosphate and D-glycero-beta-D-manno-heptose 7-phosphate from sedoheptulose 7-phosphate: step 1/1.</text>
</comment>
<comment type="subunit">
    <text evidence="1">Homotetramer.</text>
</comment>
<comment type="subcellular location">
    <subcellularLocation>
        <location evidence="1">Cytoplasm</location>
    </subcellularLocation>
</comment>
<comment type="miscellaneous">
    <text evidence="1">The reaction produces a racemic mixture of D-glycero-alpha-D-manno-heptose 7-phosphate and D-glycero-beta-D-manno-heptose 7-phosphate.</text>
</comment>
<comment type="similarity">
    <text evidence="1">Belongs to the SIS family. GmhA subfamily.</text>
</comment>
<organism>
    <name type="scientific">Rhodospirillum rubrum (strain ATCC 11170 / ATH 1.1.1 / DSM 467 / LMG 4362 / NCIMB 8255 / S1)</name>
    <dbReference type="NCBI Taxonomy" id="269796"/>
    <lineage>
        <taxon>Bacteria</taxon>
        <taxon>Pseudomonadati</taxon>
        <taxon>Pseudomonadota</taxon>
        <taxon>Alphaproteobacteria</taxon>
        <taxon>Rhodospirillales</taxon>
        <taxon>Rhodospirillaceae</taxon>
        <taxon>Rhodospirillum</taxon>
    </lineage>
</organism>